<keyword id="KW-0414">Isoprene biosynthesis</keyword>
<keyword id="KW-0464">Manganese</keyword>
<keyword id="KW-0479">Metal-binding</keyword>
<keyword id="KW-0521">NADP</keyword>
<keyword id="KW-0560">Oxidoreductase</keyword>
<proteinExistence type="inferred from homology"/>
<organism>
    <name type="scientific">Anaplasma marginale (strain St. Maries)</name>
    <dbReference type="NCBI Taxonomy" id="234826"/>
    <lineage>
        <taxon>Bacteria</taxon>
        <taxon>Pseudomonadati</taxon>
        <taxon>Pseudomonadota</taxon>
        <taxon>Alphaproteobacteria</taxon>
        <taxon>Rickettsiales</taxon>
        <taxon>Anaplasmataceae</taxon>
        <taxon>Anaplasma</taxon>
    </lineage>
</organism>
<accession>Q5PAI9</accession>
<protein>
    <recommendedName>
        <fullName evidence="1">1-deoxy-D-xylulose 5-phosphate reductoisomerase</fullName>
        <shortName evidence="1">DXP reductoisomerase</shortName>
        <ecNumber evidence="1">1.1.1.267</ecNumber>
    </recommendedName>
    <alternativeName>
        <fullName evidence="1">1-deoxyxylulose-5-phosphate reductoisomerase</fullName>
    </alternativeName>
    <alternativeName>
        <fullName evidence="1">2-C-methyl-D-erythritol 4-phosphate synthase</fullName>
    </alternativeName>
</protein>
<reference key="1">
    <citation type="journal article" date="2005" name="Proc. Natl. Acad. Sci. U.S.A.">
        <title>Complete genome sequencing of Anaplasma marginale reveals that the surface is skewed to two superfamilies of outer membrane proteins.</title>
        <authorList>
            <person name="Brayton K.A."/>
            <person name="Kappmeyer L.S."/>
            <person name="Herndon D.R."/>
            <person name="Dark M.J."/>
            <person name="Tibbals D.L."/>
            <person name="Palmer G.H."/>
            <person name="McGuire T.C."/>
            <person name="Knowles D.P. Jr."/>
        </authorList>
    </citation>
    <scope>NUCLEOTIDE SEQUENCE [LARGE SCALE GENOMIC DNA]</scope>
    <source>
        <strain>St. Maries</strain>
    </source>
</reference>
<gene>
    <name evidence="1" type="primary">dxr</name>
    <name type="ordered locus">AM743</name>
</gene>
<sequence length="396" mass="42383">MLHMGRKRVSVFGSTGCIGQKAVQILRDNPDDFEVVALVAKQDAHLLASQARLLSANMAVVAEDAAYETLRELLRGTCVEVGAGTAGVMDAASRDVDSAVMAITGIAALHPVIRLIKSGVKSIALANKESVVCGGELLINAAKQTGVNIVPVDSEHNAVFQILAHDGCVARVTLTASGGPFLRWTREQMQAVTPSDALAHPVWKMGRKISVDSATMVNKALEVIEAHYLFSLDPDSIDVTVHPESVVHAVAAYPNGTSISLMSVPDMGIPTLHALYWPQSATVCGSTLDLASYGKLTFMEPDLERFPALGFGFEALRSSKPRAACIALNAANEVAVEAFLNFEIAFLDIPNIIMSAMDKLACCEVNSISEAGEYDLICRARTREICDTLKVSEFIR</sequence>
<evidence type="ECO:0000255" key="1">
    <source>
        <dbReference type="HAMAP-Rule" id="MF_00183"/>
    </source>
</evidence>
<name>DXR_ANAMM</name>
<feature type="chain" id="PRO_0000163597" description="1-deoxy-D-xylulose 5-phosphate reductoisomerase">
    <location>
        <begin position="1"/>
        <end position="396"/>
    </location>
</feature>
<feature type="binding site" evidence="1">
    <location>
        <position position="15"/>
    </location>
    <ligand>
        <name>NADPH</name>
        <dbReference type="ChEBI" id="CHEBI:57783"/>
    </ligand>
</feature>
<feature type="binding site" evidence="1">
    <location>
        <position position="16"/>
    </location>
    <ligand>
        <name>NADPH</name>
        <dbReference type="ChEBI" id="CHEBI:57783"/>
    </ligand>
</feature>
<feature type="binding site" evidence="1">
    <location>
        <position position="18"/>
    </location>
    <ligand>
        <name>NADPH</name>
        <dbReference type="ChEBI" id="CHEBI:57783"/>
    </ligand>
</feature>
<feature type="binding site" evidence="1">
    <location>
        <position position="127"/>
    </location>
    <ligand>
        <name>NADPH</name>
        <dbReference type="ChEBI" id="CHEBI:57783"/>
    </ligand>
</feature>
<feature type="binding site" evidence="1">
    <location>
        <position position="128"/>
    </location>
    <ligand>
        <name>1-deoxy-D-xylulose 5-phosphate</name>
        <dbReference type="ChEBI" id="CHEBI:57792"/>
    </ligand>
</feature>
<feature type="binding site" evidence="1">
    <location>
        <position position="129"/>
    </location>
    <ligand>
        <name>NADPH</name>
        <dbReference type="ChEBI" id="CHEBI:57783"/>
    </ligand>
</feature>
<feature type="binding site" evidence="1">
    <location>
        <position position="153"/>
    </location>
    <ligand>
        <name>Mn(2+)</name>
        <dbReference type="ChEBI" id="CHEBI:29035"/>
    </ligand>
</feature>
<feature type="binding site" evidence="1">
    <location>
        <position position="154"/>
    </location>
    <ligand>
        <name>1-deoxy-D-xylulose 5-phosphate</name>
        <dbReference type="ChEBI" id="CHEBI:57792"/>
    </ligand>
</feature>
<feature type="binding site" evidence="1">
    <location>
        <position position="155"/>
    </location>
    <ligand>
        <name>1-deoxy-D-xylulose 5-phosphate</name>
        <dbReference type="ChEBI" id="CHEBI:57792"/>
    </ligand>
</feature>
<feature type="binding site" evidence="1">
    <location>
        <position position="155"/>
    </location>
    <ligand>
        <name>Mn(2+)</name>
        <dbReference type="ChEBI" id="CHEBI:29035"/>
    </ligand>
</feature>
<feature type="binding site" evidence="1">
    <location>
        <position position="177"/>
    </location>
    <ligand>
        <name>1-deoxy-D-xylulose 5-phosphate</name>
        <dbReference type="ChEBI" id="CHEBI:57792"/>
    </ligand>
</feature>
<feature type="binding site" evidence="1">
    <location>
        <position position="200"/>
    </location>
    <ligand>
        <name>1-deoxy-D-xylulose 5-phosphate</name>
        <dbReference type="ChEBI" id="CHEBI:57792"/>
    </ligand>
</feature>
<feature type="binding site" evidence="1">
    <location>
        <position position="206"/>
    </location>
    <ligand>
        <name>NADPH</name>
        <dbReference type="ChEBI" id="CHEBI:57783"/>
    </ligand>
</feature>
<feature type="binding site" evidence="1">
    <location>
        <position position="213"/>
    </location>
    <ligand>
        <name>1-deoxy-D-xylulose 5-phosphate</name>
        <dbReference type="ChEBI" id="CHEBI:57792"/>
    </ligand>
</feature>
<feature type="binding site" evidence="1">
    <location>
        <position position="218"/>
    </location>
    <ligand>
        <name>1-deoxy-D-xylulose 5-phosphate</name>
        <dbReference type="ChEBI" id="CHEBI:57792"/>
    </ligand>
</feature>
<feature type="binding site" evidence="1">
    <location>
        <position position="219"/>
    </location>
    <ligand>
        <name>1-deoxy-D-xylulose 5-phosphate</name>
        <dbReference type="ChEBI" id="CHEBI:57792"/>
    </ligand>
</feature>
<feature type="binding site" evidence="1">
    <location>
        <position position="222"/>
    </location>
    <ligand>
        <name>1-deoxy-D-xylulose 5-phosphate</name>
        <dbReference type="ChEBI" id="CHEBI:57792"/>
    </ligand>
</feature>
<feature type="binding site" evidence="1">
    <location>
        <position position="222"/>
    </location>
    <ligand>
        <name>Mn(2+)</name>
        <dbReference type="ChEBI" id="CHEBI:29035"/>
    </ligand>
</feature>
<comment type="function">
    <text evidence="1">Catalyzes the NADPH-dependent rearrangement and reduction of 1-deoxy-D-xylulose-5-phosphate (DXP) to 2-C-methyl-D-erythritol 4-phosphate (MEP).</text>
</comment>
<comment type="catalytic activity">
    <reaction evidence="1">
        <text>2-C-methyl-D-erythritol 4-phosphate + NADP(+) = 1-deoxy-D-xylulose 5-phosphate + NADPH + H(+)</text>
        <dbReference type="Rhea" id="RHEA:13717"/>
        <dbReference type="ChEBI" id="CHEBI:15378"/>
        <dbReference type="ChEBI" id="CHEBI:57783"/>
        <dbReference type="ChEBI" id="CHEBI:57792"/>
        <dbReference type="ChEBI" id="CHEBI:58262"/>
        <dbReference type="ChEBI" id="CHEBI:58349"/>
        <dbReference type="EC" id="1.1.1.267"/>
    </reaction>
    <physiologicalReaction direction="right-to-left" evidence="1">
        <dbReference type="Rhea" id="RHEA:13719"/>
    </physiologicalReaction>
</comment>
<comment type="cofactor">
    <cofactor evidence="1">
        <name>Mg(2+)</name>
        <dbReference type="ChEBI" id="CHEBI:18420"/>
    </cofactor>
    <cofactor evidence="1">
        <name>Mn(2+)</name>
        <dbReference type="ChEBI" id="CHEBI:29035"/>
    </cofactor>
</comment>
<comment type="pathway">
    <text evidence="1">Isoprenoid biosynthesis; isopentenyl diphosphate biosynthesis via DXP pathway; isopentenyl diphosphate from 1-deoxy-D-xylulose 5-phosphate: step 1/6.</text>
</comment>
<comment type="similarity">
    <text evidence="1">Belongs to the DXR family.</text>
</comment>
<dbReference type="EC" id="1.1.1.267" evidence="1"/>
<dbReference type="EMBL" id="CP000030">
    <property type="protein sequence ID" value="AAV86691.1"/>
    <property type="molecule type" value="Genomic_DNA"/>
</dbReference>
<dbReference type="SMR" id="Q5PAI9"/>
<dbReference type="KEGG" id="ama:AM743"/>
<dbReference type="HOGENOM" id="CLU_035714_0_0_5"/>
<dbReference type="UniPathway" id="UPA00056">
    <property type="reaction ID" value="UER00092"/>
</dbReference>
<dbReference type="GO" id="GO:0030604">
    <property type="term" value="F:1-deoxy-D-xylulose-5-phosphate reductoisomerase activity"/>
    <property type="evidence" value="ECO:0007669"/>
    <property type="project" value="UniProtKB-UniRule"/>
</dbReference>
<dbReference type="GO" id="GO:0030145">
    <property type="term" value="F:manganese ion binding"/>
    <property type="evidence" value="ECO:0007669"/>
    <property type="project" value="TreeGrafter"/>
</dbReference>
<dbReference type="GO" id="GO:0070402">
    <property type="term" value="F:NADPH binding"/>
    <property type="evidence" value="ECO:0007669"/>
    <property type="project" value="InterPro"/>
</dbReference>
<dbReference type="GO" id="GO:0051484">
    <property type="term" value="P:isopentenyl diphosphate biosynthetic process, methylerythritol 4-phosphate pathway involved in terpenoid biosynthetic process"/>
    <property type="evidence" value="ECO:0007669"/>
    <property type="project" value="TreeGrafter"/>
</dbReference>
<dbReference type="FunFam" id="3.40.50.720:FF:000045">
    <property type="entry name" value="1-deoxy-D-xylulose 5-phosphate reductoisomerase"/>
    <property type="match status" value="1"/>
</dbReference>
<dbReference type="Gene3D" id="1.10.1740.10">
    <property type="match status" value="1"/>
</dbReference>
<dbReference type="Gene3D" id="3.40.50.720">
    <property type="entry name" value="NAD(P)-binding Rossmann-like Domain"/>
    <property type="match status" value="1"/>
</dbReference>
<dbReference type="HAMAP" id="MF_00183">
    <property type="entry name" value="DXP_reductoisom"/>
    <property type="match status" value="1"/>
</dbReference>
<dbReference type="InterPro" id="IPR003821">
    <property type="entry name" value="DXP_reductoisomerase"/>
</dbReference>
<dbReference type="InterPro" id="IPR013644">
    <property type="entry name" value="DXP_reductoisomerase_C"/>
</dbReference>
<dbReference type="InterPro" id="IPR013512">
    <property type="entry name" value="DXP_reductoisomerase_N"/>
</dbReference>
<dbReference type="InterPro" id="IPR026877">
    <property type="entry name" value="DXPR_C"/>
</dbReference>
<dbReference type="InterPro" id="IPR036169">
    <property type="entry name" value="DXPR_C_sf"/>
</dbReference>
<dbReference type="InterPro" id="IPR036291">
    <property type="entry name" value="NAD(P)-bd_dom_sf"/>
</dbReference>
<dbReference type="NCBIfam" id="TIGR00243">
    <property type="entry name" value="Dxr"/>
    <property type="match status" value="1"/>
</dbReference>
<dbReference type="PANTHER" id="PTHR30525">
    <property type="entry name" value="1-DEOXY-D-XYLULOSE 5-PHOSPHATE REDUCTOISOMERASE"/>
    <property type="match status" value="1"/>
</dbReference>
<dbReference type="PANTHER" id="PTHR30525:SF0">
    <property type="entry name" value="1-DEOXY-D-XYLULOSE 5-PHOSPHATE REDUCTOISOMERASE, CHLOROPLASTIC"/>
    <property type="match status" value="1"/>
</dbReference>
<dbReference type="Pfam" id="PF08436">
    <property type="entry name" value="DXP_redisom_C"/>
    <property type="match status" value="1"/>
</dbReference>
<dbReference type="Pfam" id="PF02670">
    <property type="entry name" value="DXP_reductoisom"/>
    <property type="match status" value="1"/>
</dbReference>
<dbReference type="Pfam" id="PF13288">
    <property type="entry name" value="DXPR_C"/>
    <property type="match status" value="1"/>
</dbReference>
<dbReference type="PIRSF" id="PIRSF006205">
    <property type="entry name" value="Dxp_reductismrs"/>
    <property type="match status" value="1"/>
</dbReference>
<dbReference type="SUPFAM" id="SSF69055">
    <property type="entry name" value="1-deoxy-D-xylulose-5-phosphate reductoisomerase, C-terminal domain"/>
    <property type="match status" value="1"/>
</dbReference>
<dbReference type="SUPFAM" id="SSF55347">
    <property type="entry name" value="Glyceraldehyde-3-phosphate dehydrogenase-like, C-terminal domain"/>
    <property type="match status" value="1"/>
</dbReference>
<dbReference type="SUPFAM" id="SSF51735">
    <property type="entry name" value="NAD(P)-binding Rossmann-fold domains"/>
    <property type="match status" value="1"/>
</dbReference>